<name>TAT_HV1BN</name>
<reference key="1">
    <citation type="journal article" date="1989" name="Virology">
        <title>Biological and molecular characterization of human immunodeficiency virus (HIV-1BR) from the brain of a patient with progressive dementia.</title>
        <authorList>
            <person name="Anand R."/>
            <person name="Thayer R."/>
            <person name="Srinivasan A."/>
            <person name="Nayyar S."/>
            <person name="Gardner M."/>
            <person name="Luciw P."/>
            <person name="Dandekar S."/>
        </authorList>
    </citation>
    <scope>NUCLEOTIDE SEQUENCE [GENOMIC RNA]</scope>
</reference>
<reference key="2">
    <citation type="journal article" date="2005" name="Microbes Infect.">
        <title>Decoding Tat: the biology of HIV Tat posttranslational modifications.</title>
        <authorList>
            <person name="Hetzer C."/>
            <person name="Dormeyer W."/>
            <person name="Schnolzer M."/>
            <person name="Ott M."/>
        </authorList>
    </citation>
    <scope>REVIEW</scope>
    <scope>ALTERNATIVE SPLICING</scope>
</reference>
<reference key="3">
    <citation type="journal article" date="2006" name="Front. Biosci.">
        <title>The multiple functions of HIV-1 Tat: proliferation versus apoptosis.</title>
        <authorList>
            <person name="Peruzzi F."/>
        </authorList>
    </citation>
    <scope>REVIEW</scope>
</reference>
<reference key="4">
    <citation type="journal article" date="2006" name="Microbes Infect.">
        <title>HIV tat and neurotoxicity.</title>
        <authorList>
            <person name="King J.E."/>
            <person name="Eugenin E.A."/>
            <person name="Buckner C.M."/>
            <person name="Berman J.W."/>
        </authorList>
    </citation>
    <scope>REVIEW</scope>
</reference>
<accession>P12507</accession>
<evidence type="ECO:0000250" key="1"/>
<evidence type="ECO:0000250" key="2">
    <source>
        <dbReference type="UniProtKB" id="P04608"/>
    </source>
</evidence>
<evidence type="ECO:0000255" key="3"/>
<evidence type="ECO:0000256" key="4">
    <source>
        <dbReference type="SAM" id="MobiDB-lite"/>
    </source>
</evidence>
<evidence type="ECO:0000305" key="5"/>
<organism>
    <name type="scientific">Human immunodeficiency virus type 1 group M subtype B (isolate BRVA)</name>
    <name type="common">HIV-1</name>
    <dbReference type="NCBI Taxonomy" id="11693"/>
    <lineage>
        <taxon>Viruses</taxon>
        <taxon>Riboviria</taxon>
        <taxon>Pararnavirae</taxon>
        <taxon>Artverviricota</taxon>
        <taxon>Revtraviricetes</taxon>
        <taxon>Ortervirales</taxon>
        <taxon>Retroviridae</taxon>
        <taxon>Orthoretrovirinae</taxon>
        <taxon>Lentivirus</taxon>
        <taxon>Human immunodeficiency virus type 1</taxon>
    </lineage>
</organism>
<dbReference type="EMBL" id="M21098">
    <property type="protein sequence ID" value="AAA44218.1"/>
    <property type="molecule type" value="Genomic_RNA"/>
</dbReference>
<dbReference type="GO" id="GO:0005576">
    <property type="term" value="C:extracellular region"/>
    <property type="evidence" value="ECO:0007669"/>
    <property type="project" value="UniProtKB-SubCell"/>
</dbReference>
<dbReference type="GO" id="GO:0030430">
    <property type="term" value="C:host cell cytoplasm"/>
    <property type="evidence" value="ECO:0007669"/>
    <property type="project" value="UniProtKB-SubCell"/>
</dbReference>
<dbReference type="GO" id="GO:0044196">
    <property type="term" value="C:host cell nucleolus"/>
    <property type="evidence" value="ECO:0007669"/>
    <property type="project" value="UniProtKB-SubCell"/>
</dbReference>
<dbReference type="GO" id="GO:0046872">
    <property type="term" value="F:metal ion binding"/>
    <property type="evidence" value="ECO:0007669"/>
    <property type="project" value="UniProtKB-KW"/>
</dbReference>
<dbReference type="GO" id="GO:0003723">
    <property type="term" value="F:RNA binding"/>
    <property type="evidence" value="ECO:0007669"/>
    <property type="project" value="UniProtKB-KW"/>
</dbReference>
<comment type="function">
    <text evidence="2">Transcriptional activator that increases RNA Pol II processivity, thereby increasing the level of full-length viral transcripts. Recognizes a hairpin structure at the 5'-LTR of the nascent viral mRNAs referred to as the transactivation responsive RNA element (TAR) and recruits the cyclin T1-CDK9 complex (P-TEFb complex) that will in turn hyperphosphorylate the RNA polymerase II to allow efficient elongation. The CDK9 component of P-TEFb and other Tat-activated kinases hyperphosphorylate the C-terminus of RNA Pol II that becomes stabilized and much more processive. Other factors such as HTATSF1/Tat-SF1, SUPT5H/SPT5, and HTATIP2 are also important for Tat's function. Besides its effect on RNA Pol II processivity, Tat induces chromatin remodeling of proviral genes by recruiting the histone acetyltransferases (HATs) CREBBP, EP300 and PCAF to the chromatin. This also contributes to the increase in proviral transcription rate, especially when the provirus integrates in transcriptionally silent region of the host genome. To ensure maximal activation of the LTR, Tat mediates nuclear translocation of NF-kappa-B by interacting with host RELA. Through its interaction with host TBP, Tat may also modulate transcription initiation. Tat can reactivate a latently infected cell by penetrating in it and transactivating its LTR promoter. In the cytoplasm, Tat is thought to act as a translational activator of HIV-1 mRNAs.</text>
</comment>
<comment type="function">
    <text evidence="1">Extracellular circulating Tat can be endocytosed by surrounding uninfected cells via the binding to several surface receptors such as CD26, CXCR4, heparan sulfate proteoglycans (HSPG) or LDLR. Neurons are rarely infected, but they internalize Tat via their LDLR. Endosomal low pH allows Tat to cross the endosome membrane to enter the cytosol and eventually further translocate into the nucleus, thereby inducing severe cell dysfunctions ranging from cell activation to cell death. Through its interaction with nuclear HATs, Tat is potentially able to control the acetylation-dependent cellular gene expression. Tat seems to inhibit the HAT activity of KAT5/Tip60 and TAF1, and consequently modify the expression of specific cellular genes. Modulates the expression of many cellular genes involved in cell survival, proliferation or in coding for cytokines (such as IL10) or cytokine receptors. May be involved in the derepression of host interleukin IL2 expression. Mediates the activation of cyclin-dependent kinases and dysregulation of microtubule network. Tat plays a role in T-cell and neurons apoptosis. Tat induced neurotoxicity and apoptosis probably contribute to neuroAIDS. Host extracellular matrix metalloproteinase MMP1 cleaves Tat and decreases Tat's mediated neurotoxicity. Circulating Tat also acts as a chemokine-like and/or growth factor-like molecule that binds to specific receptors on the surface of the cells, affecting many cellular pathways. In the vascular system, Tat binds to ITGAV/ITGB3 and ITGA5/ITGB1 integrins dimers at the surface of endothelial cells and competes with bFGF for heparin-binding sites, leading to an excess of soluble bFGF. Binds to KDR/VEGFR-2. All these Tat-mediated effects enhance angiogenesis in Kaposi's sarcoma lesions (By similarity).</text>
</comment>
<comment type="subunit">
    <text evidence="1">Interacts with host CCNT1. Associates with the P-TEFb complex composed at least of Tat, P-TEFb (CDK9 and CCNT1), TAR RNA, RNA Pol II. Recruits the HATs CREBBP, TAF1/TFIID, EP300, PCAF and GCN5L2. Interacts with host KAT5/Tip60; this interaction targets the latter to degradation. Interacts with the host deacetylase SIRT1. Interacts with host capping enzyme RNGTT; this interaction stimulates RNGTT. Binds to host KDR, and to the host integrins ITGAV/ITGB3 and ITGA5/ITGB1. Interacts with host KPNB1/importin beta-1 without previous binding to KPNA1/importin alpha-1. Interacts with EIF2AK2. Interacts with host nucleosome assembly protein NAP1L1; this interaction may be required for the transport of Tat within the nucleus, since the two proteins interact at the nuclear rim. Interacts with host C1QBP/SF2P32; this interaction involves lysine-acetylated Tat. Interacts with the host chemokine receptors CCR2, CCR3 and CXCR4. Interacts with host DPP4/CD26; this interaction may trigger an anti-proliferative effect. Interacts with host LDLR. Interacts with the host extracellular matrix metalloproteinase MMP1. Interacts with host PRMT6; this interaction mediates Tat's methylation. Interacts with, and is ubiquitinated by MDM2/Hdm2. Interacts with host PSMC3 and HTATIP2. Interacts with STAB1; this interaction may overcome SATB1-mediated repression of IL2 and IL2RA (interleukin) in T cells by binding to the same domain than HDAC1. Interacts (when acetylated) with human CDK13, thereby increasing HIV-1 mRNA splicing and promoting the production of the doubly spliced HIV-1 protein Nef (By similarity).</text>
</comment>
<comment type="subcellular location">
    <subcellularLocation>
        <location>Host nucleus</location>
        <location>Host nucleolus</location>
    </subcellularLocation>
    <subcellularLocation>
        <location>Host cytoplasm</location>
    </subcellularLocation>
    <subcellularLocation>
        <location>Secreted</location>
    </subcellularLocation>
    <text evidence="1">Probably localizes to both nuclear and nucleolar compartments. Nuclear localization is mediated through the interaction of the nuclear localization signal with importin KPNB1. Secretion occurs through a Golgi-independent pathway. Tat is released from infected cells to the extracellular space where it remains associated to the cell membrane, or is secreted into the cerebrospinal fluid and sera. Extracellular Tat can be endocytosed by surrounding uninfected cells via binding to several receptors depending on the cell type (By similarity).</text>
</comment>
<comment type="alternative products">
    <event type="alternative splicing"/>
    <isoform>
        <id>P12507-1</id>
        <name>Long</name>
        <sequence type="displayed"/>
    </isoform>
    <isoform>
        <id>P12507-2</id>
        <name>Short</name>
        <sequence type="described" ref="VSP_022408"/>
    </isoform>
</comment>
<comment type="domain">
    <text evidence="1">The transactivation domain mediates the interaction with CCNT1, GCN5L2, and MDM2.</text>
</comment>
<comment type="domain">
    <text evidence="1">The Arg-rich RNA-binding region binds the TAR RNA. This region also mediates the nuclear localization through direct binding to KPNB1 and is involved in Tat's transfer across cell membranes (protein transduction). The same region is required for the interaction with EP300, PCAF, EIF2AK2 and KDR (By similarity).</text>
</comment>
<comment type="domain">
    <text evidence="1 5">The Cys-rich region may bind 2 zinc ions (Potential). This region is involved in binding to KAT5 (By similarity).</text>
</comment>
<comment type="domain">
    <text evidence="1">The cell attachment site mediates the interaction with ITGAV/ITGB3 and ITGA5/ITGB1 integrins, leading to vascular cell migration and invasion. This interaction also provides endothelial cells with the adhesion signal they require to grow in response to mitogens (By similarity).</text>
</comment>
<comment type="PTM">
    <text evidence="1">Acetylation by EP300, CREBBP, GCN5L2/GCN5 and PCAF regulates the transactivation activity of Tat.</text>
</comment>
<comment type="PTM">
    <text evidence="1">Phosphorylated by EIF2AK2 on serine and threonine residues adjacent to the basic region important for TAR RNA binding and function. Phosphorylation of Tat by EIF2AK2 is dependent on the prior activation of EIF2AK2 by dsRNA (By similarity).</text>
</comment>
<comment type="PTM">
    <text evidence="1">Asymmetrical arginine methylation by host PRMT6 seems to diminish the transactivation capacity of Tat and affects the interaction with host CCNT1.</text>
</comment>
<comment type="PTM">
    <text evidence="1">Polyubiquitination by MDM2 does not target Tat to degradation, but activates its transactivation function and fosters interaction with CCNT1 and TAR RNA.</text>
</comment>
<comment type="miscellaneous">
    <text>This virus is cytopathically active and was harvested from the brain tissue of a neurological AIDS patient.</text>
</comment>
<comment type="miscellaneous">
    <text>HIV-1 lineages are divided in three main groups, M (for Major), O (for Outlier), and N (for New, or Non-M, Non-O). The vast majority of strains found worldwide belong to the group M. Group O seems to be endemic to and largely confined to Cameroon and neighboring countries in West Central Africa, where these viruses represent a small minority of HIV-1 strains. The group N is represented by a limited number of isolates from Cameroonian persons. The group M is further subdivided in 9 clades or subtypes (A to D, F to H, J and K).</text>
</comment>
<comment type="miscellaneous">
    <molecule>Isoform Short</molecule>
    <text evidence="5">Expressed in the late stage of the infection cycle, when unspliced viral RNAs are exported to the cytoplasm by the viral Rev protein.</text>
</comment>
<comment type="similarity">
    <text evidence="5">Belongs to the lentiviruses Tat family.</text>
</comment>
<proteinExistence type="inferred from homology"/>
<organismHost>
    <name type="scientific">Homo sapiens</name>
    <name type="common">Human</name>
    <dbReference type="NCBI Taxonomy" id="9606"/>
</organismHost>
<keyword id="KW-0007">Acetylation</keyword>
<keyword id="KW-0010">Activator</keyword>
<keyword id="KW-0014">AIDS</keyword>
<keyword id="KW-0025">Alternative splicing</keyword>
<keyword id="KW-0053">Apoptosis</keyword>
<keyword id="KW-1035">Host cytoplasm</keyword>
<keyword id="KW-1048">Host nucleus</keyword>
<keyword id="KW-0945">Host-virus interaction</keyword>
<keyword id="KW-1017">Isopeptide bond</keyword>
<keyword id="KW-0479">Metal-binding</keyword>
<keyword id="KW-0488">Methylation</keyword>
<keyword id="KW-0597">Phosphoprotein</keyword>
<keyword id="KW-0694">RNA-binding</keyword>
<keyword id="KW-0964">Secreted</keyword>
<keyword id="KW-0804">Transcription</keyword>
<keyword id="KW-0805">Transcription regulation</keyword>
<keyword id="KW-0832">Ubl conjugation</keyword>
<keyword id="KW-0862">Zinc</keyword>
<protein>
    <recommendedName>
        <fullName>Protein Tat</fullName>
    </recommendedName>
    <alternativeName>
        <fullName>Transactivating regulatory protein</fullName>
    </alternativeName>
</protein>
<feature type="chain" id="PRO_0000085353" description="Protein Tat">
    <location>
        <begin position="1" status="less than"/>
        <end position="44"/>
    </location>
</feature>
<feature type="region of interest" description="Disordered" evidence="4">
    <location>
        <begin position="1"/>
        <end position="44"/>
    </location>
</feature>
<feature type="short sequence motif" description="Cell attachment site" evidence="3">
    <location>
        <begin position="21"/>
        <end position="23"/>
    </location>
</feature>
<feature type="compositionally biased region" description="Polar residues" evidence="4">
    <location>
        <begin position="7"/>
        <end position="18"/>
    </location>
</feature>
<feature type="compositionally biased region" description="Basic and acidic residues" evidence="4">
    <location>
        <begin position="26"/>
        <end position="36"/>
    </location>
</feature>
<feature type="cross-link" description="Glycyl lysine isopeptide (Lys-Gly) (interchain with G-Cter in ubiquitin)" evidence="1">
    <location>
        <position position="14"/>
    </location>
</feature>
<feature type="splice variant" id="VSP_022408" description="In isoform Short." evidence="5">
    <location>
        <begin position="16"/>
        <end position="44"/>
    </location>
</feature>
<feature type="non-terminal residue">
    <location>
        <position position="1"/>
    </location>
</feature>
<sequence>APEDSQSHQVSLSKQPASQAGGDPTGPKESKKKVESETETDPVP</sequence>